<evidence type="ECO:0000255" key="1">
    <source>
        <dbReference type="HAMAP-Rule" id="MF_00736"/>
    </source>
</evidence>
<evidence type="ECO:0000305" key="2"/>
<sequence>MAKKVEKVVKLQIPAGKANPAPPVGPALGQAGVNIMGFCKEFNARTQEDAGLIIPVEISVYEDRSFTFITKTPPAPVLLKKAAGVEKGSGEPNKTKVATVTKDQVREIANQKMQDLNAADEEAAMRIIEGTARSMGITVQ</sequence>
<reference key="1">
    <citation type="journal article" date="2005" name="Proc. Natl. Acad. Sci. U.S.A.">
        <title>Whole genome sequence of Staphylococcus saprophyticus reveals the pathogenesis of uncomplicated urinary tract infection.</title>
        <authorList>
            <person name="Kuroda M."/>
            <person name="Yamashita A."/>
            <person name="Hirakawa H."/>
            <person name="Kumano M."/>
            <person name="Morikawa K."/>
            <person name="Higashide M."/>
            <person name="Maruyama A."/>
            <person name="Inose Y."/>
            <person name="Matoba K."/>
            <person name="Toh H."/>
            <person name="Kuhara S."/>
            <person name="Hattori M."/>
            <person name="Ohta T."/>
        </authorList>
    </citation>
    <scope>NUCLEOTIDE SEQUENCE [LARGE SCALE GENOMIC DNA]</scope>
    <source>
        <strain>ATCC 15305 / DSM 20229 / NCIMB 8711 / NCTC 7292 / S-41</strain>
    </source>
</reference>
<accession>Q49V47</accession>
<proteinExistence type="inferred from homology"/>
<comment type="function">
    <text evidence="1">Forms part of the ribosomal stalk which helps the ribosome interact with GTP-bound translation factors.</text>
</comment>
<comment type="subunit">
    <text evidence="1">Part of the ribosomal stalk of the 50S ribosomal subunit. Interacts with L10 and the large rRNA to form the base of the stalk. L10 forms an elongated spine to which L12 dimers bind in a sequential fashion forming a multimeric L10(L12)X complex.</text>
</comment>
<comment type="PTM">
    <text evidence="1">One or more lysine residues are methylated.</text>
</comment>
<comment type="similarity">
    <text evidence="1">Belongs to the universal ribosomal protein uL11 family.</text>
</comment>
<keyword id="KW-0488">Methylation</keyword>
<keyword id="KW-1185">Reference proteome</keyword>
<keyword id="KW-0687">Ribonucleoprotein</keyword>
<keyword id="KW-0689">Ribosomal protein</keyword>
<keyword id="KW-0694">RNA-binding</keyword>
<keyword id="KW-0699">rRNA-binding</keyword>
<organism>
    <name type="scientific">Staphylococcus saprophyticus subsp. saprophyticus (strain ATCC 15305 / DSM 20229 / NCIMB 8711 / NCTC 7292 / S-41)</name>
    <dbReference type="NCBI Taxonomy" id="342451"/>
    <lineage>
        <taxon>Bacteria</taxon>
        <taxon>Bacillati</taxon>
        <taxon>Bacillota</taxon>
        <taxon>Bacilli</taxon>
        <taxon>Bacillales</taxon>
        <taxon>Staphylococcaceae</taxon>
        <taxon>Staphylococcus</taxon>
    </lineage>
</organism>
<gene>
    <name evidence="1" type="primary">rplK</name>
    <name type="ordered locus">SSP2218</name>
</gene>
<feature type="chain" id="PRO_0000104371" description="Large ribosomal subunit protein uL11">
    <location>
        <begin position="1"/>
        <end position="140"/>
    </location>
</feature>
<dbReference type="EMBL" id="AP008934">
    <property type="protein sequence ID" value="BAE19363.1"/>
    <property type="molecule type" value="Genomic_DNA"/>
</dbReference>
<dbReference type="RefSeq" id="WP_002484165.1">
    <property type="nucleotide sequence ID" value="NZ_MTGA01000039.1"/>
</dbReference>
<dbReference type="SMR" id="Q49V47"/>
<dbReference type="GeneID" id="66868372"/>
<dbReference type="KEGG" id="ssp:SSP2218"/>
<dbReference type="eggNOG" id="COG0080">
    <property type="taxonomic scope" value="Bacteria"/>
</dbReference>
<dbReference type="HOGENOM" id="CLU_074237_2_1_9"/>
<dbReference type="OrthoDB" id="9802408at2"/>
<dbReference type="Proteomes" id="UP000006371">
    <property type="component" value="Chromosome"/>
</dbReference>
<dbReference type="GO" id="GO:0022625">
    <property type="term" value="C:cytosolic large ribosomal subunit"/>
    <property type="evidence" value="ECO:0007669"/>
    <property type="project" value="TreeGrafter"/>
</dbReference>
<dbReference type="GO" id="GO:0070180">
    <property type="term" value="F:large ribosomal subunit rRNA binding"/>
    <property type="evidence" value="ECO:0007669"/>
    <property type="project" value="UniProtKB-UniRule"/>
</dbReference>
<dbReference type="GO" id="GO:0003735">
    <property type="term" value="F:structural constituent of ribosome"/>
    <property type="evidence" value="ECO:0007669"/>
    <property type="project" value="InterPro"/>
</dbReference>
<dbReference type="GO" id="GO:0006412">
    <property type="term" value="P:translation"/>
    <property type="evidence" value="ECO:0007669"/>
    <property type="project" value="UniProtKB-UniRule"/>
</dbReference>
<dbReference type="CDD" id="cd00349">
    <property type="entry name" value="Ribosomal_L11"/>
    <property type="match status" value="1"/>
</dbReference>
<dbReference type="FunFam" id="1.10.10.250:FF:000001">
    <property type="entry name" value="50S ribosomal protein L11"/>
    <property type="match status" value="1"/>
</dbReference>
<dbReference type="FunFam" id="3.30.1550.10:FF:000001">
    <property type="entry name" value="50S ribosomal protein L11"/>
    <property type="match status" value="1"/>
</dbReference>
<dbReference type="Gene3D" id="1.10.10.250">
    <property type="entry name" value="Ribosomal protein L11, C-terminal domain"/>
    <property type="match status" value="1"/>
</dbReference>
<dbReference type="Gene3D" id="3.30.1550.10">
    <property type="entry name" value="Ribosomal protein L11/L12, N-terminal domain"/>
    <property type="match status" value="1"/>
</dbReference>
<dbReference type="HAMAP" id="MF_00736">
    <property type="entry name" value="Ribosomal_uL11"/>
    <property type="match status" value="1"/>
</dbReference>
<dbReference type="InterPro" id="IPR000911">
    <property type="entry name" value="Ribosomal_uL11"/>
</dbReference>
<dbReference type="InterPro" id="IPR006519">
    <property type="entry name" value="Ribosomal_uL11_bac-typ"/>
</dbReference>
<dbReference type="InterPro" id="IPR020783">
    <property type="entry name" value="Ribosomal_uL11_C"/>
</dbReference>
<dbReference type="InterPro" id="IPR036769">
    <property type="entry name" value="Ribosomal_uL11_C_sf"/>
</dbReference>
<dbReference type="InterPro" id="IPR020784">
    <property type="entry name" value="Ribosomal_uL11_N"/>
</dbReference>
<dbReference type="InterPro" id="IPR036796">
    <property type="entry name" value="Ribosomal_uL11_N_sf"/>
</dbReference>
<dbReference type="NCBIfam" id="TIGR01632">
    <property type="entry name" value="L11_bact"/>
    <property type="match status" value="1"/>
</dbReference>
<dbReference type="PANTHER" id="PTHR11661">
    <property type="entry name" value="60S RIBOSOMAL PROTEIN L12"/>
    <property type="match status" value="1"/>
</dbReference>
<dbReference type="PANTHER" id="PTHR11661:SF1">
    <property type="entry name" value="LARGE RIBOSOMAL SUBUNIT PROTEIN UL11M"/>
    <property type="match status" value="1"/>
</dbReference>
<dbReference type="Pfam" id="PF00298">
    <property type="entry name" value="Ribosomal_L11"/>
    <property type="match status" value="1"/>
</dbReference>
<dbReference type="Pfam" id="PF03946">
    <property type="entry name" value="Ribosomal_L11_N"/>
    <property type="match status" value="1"/>
</dbReference>
<dbReference type="SMART" id="SM00649">
    <property type="entry name" value="RL11"/>
    <property type="match status" value="1"/>
</dbReference>
<dbReference type="SUPFAM" id="SSF54747">
    <property type="entry name" value="Ribosomal L11/L12e N-terminal domain"/>
    <property type="match status" value="1"/>
</dbReference>
<dbReference type="SUPFAM" id="SSF46906">
    <property type="entry name" value="Ribosomal protein L11, C-terminal domain"/>
    <property type="match status" value="1"/>
</dbReference>
<name>RL11_STAS1</name>
<protein>
    <recommendedName>
        <fullName evidence="1">Large ribosomal subunit protein uL11</fullName>
    </recommendedName>
    <alternativeName>
        <fullName evidence="2">50S ribosomal protein L11</fullName>
    </alternativeName>
</protein>